<feature type="chain" id="PRO_0000259669" description="Uncharacterized protein M6_Spy0510">
    <location>
        <begin position="1"/>
        <end position="149"/>
    </location>
</feature>
<feature type="transmembrane region" description="Helical" evidence="1">
    <location>
        <begin position="12"/>
        <end position="31"/>
    </location>
</feature>
<evidence type="ECO:0000255" key="1"/>
<evidence type="ECO:0000269" key="2">
    <source ref="2"/>
</evidence>
<evidence type="ECO:0000305" key="3"/>
<evidence type="ECO:0000312" key="4">
    <source>
        <dbReference type="EMBL" id="AAT86645.1"/>
    </source>
</evidence>
<gene>
    <name type="ordered locus">M6_Spy0510</name>
</gene>
<reference evidence="4" key="1">
    <citation type="journal article" date="2004" name="J. Infect. Dis.">
        <title>Progress toward characterization of the group A Streptococcus metagenome: complete genome sequence of a macrolide-resistant serotype M6 strain.</title>
        <authorList>
            <person name="Banks D.J."/>
            <person name="Porcella S.F."/>
            <person name="Barbian K.D."/>
            <person name="Beres S.B."/>
            <person name="Philips L.E."/>
            <person name="Voyich J.M."/>
            <person name="DeLeo F.R."/>
            <person name="Martin J.M."/>
            <person name="Somerville G.A."/>
            <person name="Musser J.M."/>
        </authorList>
    </citation>
    <scope>NUCLEOTIDE SEQUENCE [LARGE SCALE GENOMIC DNA]</scope>
    <source>
        <strain>ATCC BAA-946 / MGAS10394</strain>
    </source>
</reference>
<reference evidence="3" key="2">
    <citation type="submission" date="2000-05" db="UniProtKB">
        <title>Two-dimensional gel electrophoresis map of Streptococcus pyogenes proteins.</title>
        <authorList>
            <person name="Hogan D.A."/>
            <person name="Du P."/>
            <person name="Stevenson T.I."/>
            <person name="Whitton M."/>
            <person name="Kilby G.W."/>
            <person name="Rogers J."/>
            <person name="VanBogelen R.A."/>
        </authorList>
    </citation>
    <scope>PROTEIN SEQUENCE OF 11-33; 44-60 AND 72-98</scope>
    <scope>MASS SPECTROMETRY</scope>
    <source>
        <strain evidence="2">JRS4 / Serotype M6</strain>
    </source>
</reference>
<protein>
    <recommendedName>
        <fullName>Uncharacterized protein M6_Spy0510</fullName>
    </recommendedName>
</protein>
<keyword id="KW-0903">Direct protein sequencing</keyword>
<keyword id="KW-0472">Membrane</keyword>
<keyword id="KW-0812">Transmembrane</keyword>
<keyword id="KW-1133">Transmembrane helix</keyword>
<proteinExistence type="evidence at protein level"/>
<name>Y510_STRP6</name>
<dbReference type="EMBL" id="CP000003">
    <property type="protein sequence ID" value="AAT86645.1"/>
    <property type="molecule type" value="Genomic_DNA"/>
</dbReference>
<dbReference type="SMR" id="Q5XD68"/>
<dbReference type="KEGG" id="spa:M6_Spy0510"/>
<dbReference type="HOGENOM" id="CLU_130439_0_0_9"/>
<dbReference type="Proteomes" id="UP000001167">
    <property type="component" value="Chromosome"/>
</dbReference>
<dbReference type="GO" id="GO:0016020">
    <property type="term" value="C:membrane"/>
    <property type="evidence" value="ECO:0007669"/>
    <property type="project" value="UniProtKB-SubCell"/>
</dbReference>
<dbReference type="InterPro" id="IPR024623">
    <property type="entry name" value="YtxH"/>
</dbReference>
<dbReference type="Pfam" id="PF12732">
    <property type="entry name" value="YtxH"/>
    <property type="match status" value="1"/>
</dbReference>
<organism>
    <name type="scientific">Streptococcus pyogenes serotype M6 (strain ATCC BAA-946 / MGAS10394)</name>
    <dbReference type="NCBI Taxonomy" id="286636"/>
    <lineage>
        <taxon>Bacteria</taxon>
        <taxon>Bacillati</taxon>
        <taxon>Bacillota</taxon>
        <taxon>Bacilli</taxon>
        <taxon>Lactobacillales</taxon>
        <taxon>Streptococcaceae</taxon>
        <taxon>Streptococcus</taxon>
    </lineage>
</organism>
<sequence length="149" mass="16971">MEKKEKSMNKSFKNLVIGAVSGVAAAYFLSTEKGKALKNRAEKAYQAYKESPDDYHQFAKEKGSEYSHLARDTFYDVKDKLASGDLTKEDMLDLLKDKTTAFVQKTKETFAEVEAKEKQDDVIIDLNEDDIIIDYTEQDEPVSDTLDKH</sequence>
<comment type="subcellular location">
    <subcellularLocation>
        <location evidence="1">Membrane</location>
        <topology evidence="1">Single-pass membrane protein</topology>
    </subcellularLocation>
</comment>
<comment type="mass spectrometry" mass="16932.9" method="Electrospray" evidence="2"/>
<accession>Q5XD68</accession>
<accession>P82558</accession>